<accession>B7L0S0</accession>
<organism>
    <name type="scientific">Methylorubrum extorquens (strain CM4 / NCIMB 13688)</name>
    <name type="common">Methylobacterium extorquens</name>
    <dbReference type="NCBI Taxonomy" id="440085"/>
    <lineage>
        <taxon>Bacteria</taxon>
        <taxon>Pseudomonadati</taxon>
        <taxon>Pseudomonadota</taxon>
        <taxon>Alphaproteobacteria</taxon>
        <taxon>Hyphomicrobiales</taxon>
        <taxon>Methylobacteriaceae</taxon>
        <taxon>Methylorubrum</taxon>
    </lineage>
</organism>
<sequence length="88" mass="9822">MPKRVLQGVVVSDKTDKTIVVKVERRFTHPVMKKTVRRSKNYHAHDEANAAKIGQTVFIEESRPYSKTKTWKLVEDQAAAAEAAGTAA</sequence>
<gene>
    <name evidence="1" type="primary">rpsQ</name>
    <name type="ordered locus">Mchl_2449</name>
</gene>
<name>RS17_METC4</name>
<evidence type="ECO:0000255" key="1">
    <source>
        <dbReference type="HAMAP-Rule" id="MF_01345"/>
    </source>
</evidence>
<evidence type="ECO:0000305" key="2"/>
<proteinExistence type="inferred from homology"/>
<reference key="1">
    <citation type="submission" date="2008-12" db="EMBL/GenBank/DDBJ databases">
        <title>Complete sequence of chromosome of Methylobacterium chloromethanicum CM4.</title>
        <authorList>
            <consortium name="US DOE Joint Genome Institute"/>
            <person name="Lucas S."/>
            <person name="Copeland A."/>
            <person name="Lapidus A."/>
            <person name="Glavina del Rio T."/>
            <person name="Dalin E."/>
            <person name="Tice H."/>
            <person name="Bruce D."/>
            <person name="Goodwin L."/>
            <person name="Pitluck S."/>
            <person name="Chertkov O."/>
            <person name="Brettin T."/>
            <person name="Detter J.C."/>
            <person name="Han C."/>
            <person name="Larimer F."/>
            <person name="Land M."/>
            <person name="Hauser L."/>
            <person name="Kyrpides N."/>
            <person name="Mikhailova N."/>
            <person name="Marx C."/>
            <person name="Richardson P."/>
        </authorList>
    </citation>
    <scope>NUCLEOTIDE SEQUENCE [LARGE SCALE GENOMIC DNA]</scope>
    <source>
        <strain>CM4 / NCIMB 13688</strain>
    </source>
</reference>
<comment type="function">
    <text evidence="1">One of the primary rRNA binding proteins, it binds specifically to the 5'-end of 16S ribosomal RNA.</text>
</comment>
<comment type="subunit">
    <text evidence="1">Part of the 30S ribosomal subunit.</text>
</comment>
<comment type="similarity">
    <text evidence="1">Belongs to the universal ribosomal protein uS17 family.</text>
</comment>
<feature type="chain" id="PRO_1000166486" description="Small ribosomal subunit protein uS17">
    <location>
        <begin position="1"/>
        <end position="88"/>
    </location>
</feature>
<protein>
    <recommendedName>
        <fullName evidence="1">Small ribosomal subunit protein uS17</fullName>
    </recommendedName>
    <alternativeName>
        <fullName evidence="2">30S ribosomal protein S17</fullName>
    </alternativeName>
</protein>
<dbReference type="EMBL" id="CP001298">
    <property type="protein sequence ID" value="ACK83291.1"/>
    <property type="molecule type" value="Genomic_DNA"/>
</dbReference>
<dbReference type="RefSeq" id="WP_003597108.1">
    <property type="nucleotide sequence ID" value="NC_011757.1"/>
</dbReference>
<dbReference type="SMR" id="B7L0S0"/>
<dbReference type="GeneID" id="72989859"/>
<dbReference type="KEGG" id="mch:Mchl_2449"/>
<dbReference type="HOGENOM" id="CLU_073626_1_1_5"/>
<dbReference type="Proteomes" id="UP000002385">
    <property type="component" value="Chromosome"/>
</dbReference>
<dbReference type="GO" id="GO:0022627">
    <property type="term" value="C:cytosolic small ribosomal subunit"/>
    <property type="evidence" value="ECO:0007669"/>
    <property type="project" value="TreeGrafter"/>
</dbReference>
<dbReference type="GO" id="GO:0019843">
    <property type="term" value="F:rRNA binding"/>
    <property type="evidence" value="ECO:0007669"/>
    <property type="project" value="UniProtKB-UniRule"/>
</dbReference>
<dbReference type="GO" id="GO:0003735">
    <property type="term" value="F:structural constituent of ribosome"/>
    <property type="evidence" value="ECO:0007669"/>
    <property type="project" value="InterPro"/>
</dbReference>
<dbReference type="GO" id="GO:0006412">
    <property type="term" value="P:translation"/>
    <property type="evidence" value="ECO:0007669"/>
    <property type="project" value="UniProtKB-UniRule"/>
</dbReference>
<dbReference type="CDD" id="cd00364">
    <property type="entry name" value="Ribosomal_uS17"/>
    <property type="match status" value="1"/>
</dbReference>
<dbReference type="Gene3D" id="2.40.50.140">
    <property type="entry name" value="Nucleic acid-binding proteins"/>
    <property type="match status" value="1"/>
</dbReference>
<dbReference type="HAMAP" id="MF_01345_B">
    <property type="entry name" value="Ribosomal_uS17_B"/>
    <property type="match status" value="1"/>
</dbReference>
<dbReference type="InterPro" id="IPR012340">
    <property type="entry name" value="NA-bd_OB-fold"/>
</dbReference>
<dbReference type="InterPro" id="IPR000266">
    <property type="entry name" value="Ribosomal_uS17"/>
</dbReference>
<dbReference type="InterPro" id="IPR019984">
    <property type="entry name" value="Ribosomal_uS17_bact/chlr"/>
</dbReference>
<dbReference type="NCBIfam" id="NF004123">
    <property type="entry name" value="PRK05610.1"/>
    <property type="match status" value="1"/>
</dbReference>
<dbReference type="NCBIfam" id="TIGR03635">
    <property type="entry name" value="uS17_bact"/>
    <property type="match status" value="1"/>
</dbReference>
<dbReference type="PANTHER" id="PTHR10744">
    <property type="entry name" value="40S RIBOSOMAL PROTEIN S11 FAMILY MEMBER"/>
    <property type="match status" value="1"/>
</dbReference>
<dbReference type="PANTHER" id="PTHR10744:SF1">
    <property type="entry name" value="SMALL RIBOSOMAL SUBUNIT PROTEIN US17M"/>
    <property type="match status" value="1"/>
</dbReference>
<dbReference type="Pfam" id="PF00366">
    <property type="entry name" value="Ribosomal_S17"/>
    <property type="match status" value="1"/>
</dbReference>
<dbReference type="PRINTS" id="PR00973">
    <property type="entry name" value="RIBOSOMALS17"/>
</dbReference>
<dbReference type="SUPFAM" id="SSF50249">
    <property type="entry name" value="Nucleic acid-binding proteins"/>
    <property type="match status" value="1"/>
</dbReference>
<keyword id="KW-0687">Ribonucleoprotein</keyword>
<keyword id="KW-0689">Ribosomal protein</keyword>
<keyword id="KW-0694">RNA-binding</keyword>
<keyword id="KW-0699">rRNA-binding</keyword>